<protein>
    <recommendedName>
        <fullName evidence="1">Phosphomethylpyrimidine synthase</fullName>
        <ecNumber evidence="1">4.1.99.17</ecNumber>
    </recommendedName>
    <alternativeName>
        <fullName evidence="1">Hydroxymethylpyrimidine phosphate synthase</fullName>
        <shortName evidence="1">HMP-P synthase</shortName>
        <shortName evidence="1">HMP-phosphate synthase</shortName>
        <shortName evidence="1">HMPP synthase</shortName>
    </alternativeName>
    <alternativeName>
        <fullName evidence="1">Thiamine biosynthesis protein ThiC</fullName>
    </alternativeName>
</protein>
<keyword id="KW-0004">4Fe-4S</keyword>
<keyword id="KW-0408">Iron</keyword>
<keyword id="KW-0411">Iron-sulfur</keyword>
<keyword id="KW-0456">Lyase</keyword>
<keyword id="KW-0479">Metal-binding</keyword>
<keyword id="KW-0949">S-adenosyl-L-methionine</keyword>
<keyword id="KW-0784">Thiamine biosynthesis</keyword>
<keyword id="KW-0862">Zinc</keyword>
<evidence type="ECO:0000255" key="1">
    <source>
        <dbReference type="HAMAP-Rule" id="MF_00089"/>
    </source>
</evidence>
<dbReference type="EC" id="4.1.99.17" evidence="1"/>
<dbReference type="EMBL" id="CP001635">
    <property type="protein sequence ID" value="ACS21333.1"/>
    <property type="molecule type" value="Genomic_DNA"/>
</dbReference>
<dbReference type="SMR" id="C5CM74"/>
<dbReference type="STRING" id="543728.Vapar_4728"/>
<dbReference type="KEGG" id="vap:Vapar_4728"/>
<dbReference type="eggNOG" id="COG0422">
    <property type="taxonomic scope" value="Bacteria"/>
</dbReference>
<dbReference type="HOGENOM" id="CLU_013181_2_1_4"/>
<dbReference type="OrthoDB" id="9805897at2"/>
<dbReference type="UniPathway" id="UPA00060"/>
<dbReference type="GO" id="GO:0005829">
    <property type="term" value="C:cytosol"/>
    <property type="evidence" value="ECO:0007669"/>
    <property type="project" value="TreeGrafter"/>
</dbReference>
<dbReference type="GO" id="GO:0051539">
    <property type="term" value="F:4 iron, 4 sulfur cluster binding"/>
    <property type="evidence" value="ECO:0007669"/>
    <property type="project" value="UniProtKB-KW"/>
</dbReference>
<dbReference type="GO" id="GO:0016830">
    <property type="term" value="F:carbon-carbon lyase activity"/>
    <property type="evidence" value="ECO:0007669"/>
    <property type="project" value="InterPro"/>
</dbReference>
<dbReference type="GO" id="GO:0008270">
    <property type="term" value="F:zinc ion binding"/>
    <property type="evidence" value="ECO:0007669"/>
    <property type="project" value="UniProtKB-UniRule"/>
</dbReference>
<dbReference type="GO" id="GO:0009228">
    <property type="term" value="P:thiamine biosynthetic process"/>
    <property type="evidence" value="ECO:0007669"/>
    <property type="project" value="UniProtKB-KW"/>
</dbReference>
<dbReference type="GO" id="GO:0009229">
    <property type="term" value="P:thiamine diphosphate biosynthetic process"/>
    <property type="evidence" value="ECO:0007669"/>
    <property type="project" value="UniProtKB-UniRule"/>
</dbReference>
<dbReference type="FunFam" id="3.20.20.540:FF:000001">
    <property type="entry name" value="Phosphomethylpyrimidine synthase"/>
    <property type="match status" value="1"/>
</dbReference>
<dbReference type="Gene3D" id="6.10.250.620">
    <property type="match status" value="1"/>
</dbReference>
<dbReference type="Gene3D" id="3.20.20.540">
    <property type="entry name" value="Radical SAM ThiC family, central domain"/>
    <property type="match status" value="1"/>
</dbReference>
<dbReference type="HAMAP" id="MF_00089">
    <property type="entry name" value="ThiC"/>
    <property type="match status" value="1"/>
</dbReference>
<dbReference type="InterPro" id="IPR037509">
    <property type="entry name" value="ThiC"/>
</dbReference>
<dbReference type="InterPro" id="IPR025747">
    <property type="entry name" value="ThiC-associated_dom"/>
</dbReference>
<dbReference type="InterPro" id="IPR038521">
    <property type="entry name" value="ThiC/Bza_core_dom"/>
</dbReference>
<dbReference type="InterPro" id="IPR002817">
    <property type="entry name" value="ThiC/BzaA/B"/>
</dbReference>
<dbReference type="NCBIfam" id="NF006763">
    <property type="entry name" value="PRK09284.1"/>
    <property type="match status" value="1"/>
</dbReference>
<dbReference type="NCBIfam" id="NF009895">
    <property type="entry name" value="PRK13352.1"/>
    <property type="match status" value="1"/>
</dbReference>
<dbReference type="NCBIfam" id="TIGR00190">
    <property type="entry name" value="thiC"/>
    <property type="match status" value="1"/>
</dbReference>
<dbReference type="PANTHER" id="PTHR30557:SF1">
    <property type="entry name" value="PHOSPHOMETHYLPYRIMIDINE SYNTHASE, CHLOROPLASTIC"/>
    <property type="match status" value="1"/>
</dbReference>
<dbReference type="PANTHER" id="PTHR30557">
    <property type="entry name" value="THIAMINE BIOSYNTHESIS PROTEIN THIC"/>
    <property type="match status" value="1"/>
</dbReference>
<dbReference type="Pfam" id="PF13667">
    <property type="entry name" value="ThiC-associated"/>
    <property type="match status" value="1"/>
</dbReference>
<dbReference type="Pfam" id="PF01964">
    <property type="entry name" value="ThiC_Rad_SAM"/>
    <property type="match status" value="1"/>
</dbReference>
<dbReference type="SFLD" id="SFLDF00407">
    <property type="entry name" value="phosphomethylpyrimidine_syntha"/>
    <property type="match status" value="1"/>
</dbReference>
<dbReference type="SFLD" id="SFLDG01114">
    <property type="entry name" value="phosphomethylpyrimidine_syntha"/>
    <property type="match status" value="1"/>
</dbReference>
<dbReference type="SFLD" id="SFLDS00113">
    <property type="entry name" value="Radical_SAM_Phosphomethylpyrim"/>
    <property type="match status" value="1"/>
</dbReference>
<accession>C5CM74</accession>
<comment type="function">
    <text evidence="1">Catalyzes the synthesis of the hydroxymethylpyrimidine phosphate (HMP-P) moiety of thiamine from aminoimidazole ribotide (AIR) in a radical S-adenosyl-L-methionine (SAM)-dependent reaction.</text>
</comment>
<comment type="catalytic activity">
    <reaction evidence="1">
        <text>5-amino-1-(5-phospho-beta-D-ribosyl)imidazole + S-adenosyl-L-methionine = 4-amino-2-methyl-5-(phosphooxymethyl)pyrimidine + CO + 5'-deoxyadenosine + formate + L-methionine + 3 H(+)</text>
        <dbReference type="Rhea" id="RHEA:24840"/>
        <dbReference type="ChEBI" id="CHEBI:15378"/>
        <dbReference type="ChEBI" id="CHEBI:15740"/>
        <dbReference type="ChEBI" id="CHEBI:17245"/>
        <dbReference type="ChEBI" id="CHEBI:17319"/>
        <dbReference type="ChEBI" id="CHEBI:57844"/>
        <dbReference type="ChEBI" id="CHEBI:58354"/>
        <dbReference type="ChEBI" id="CHEBI:59789"/>
        <dbReference type="ChEBI" id="CHEBI:137981"/>
        <dbReference type="EC" id="4.1.99.17"/>
    </reaction>
</comment>
<comment type="cofactor">
    <cofactor evidence="1">
        <name>[4Fe-4S] cluster</name>
        <dbReference type="ChEBI" id="CHEBI:49883"/>
    </cofactor>
    <text evidence="1">Binds 1 [4Fe-4S] cluster per subunit. The cluster is coordinated with 3 cysteines and an exchangeable S-adenosyl-L-methionine.</text>
</comment>
<comment type="pathway">
    <text evidence="1">Cofactor biosynthesis; thiamine diphosphate biosynthesis.</text>
</comment>
<comment type="subunit">
    <text evidence="1">Homodimer.</text>
</comment>
<comment type="similarity">
    <text evidence="1">Belongs to the ThiC family.</text>
</comment>
<gene>
    <name evidence="1" type="primary">thiC</name>
    <name type="ordered locus">Vapar_4728</name>
</gene>
<proteinExistence type="inferred from homology"/>
<sequence length="628" mass="69500">MNAPDKFTSLLSLTREPFPASHKCLIPGSRPDLNVPVRDVLLTNGETVSLYDTSGPYTDAKVEIDVRRGLPGVRGAWITERNDTESYEGRSHQALDEGLKHAHDHDAQRLAELRAGASALQRTPRRAKAGANVTQMHYARRGIVTPEMEYVALRENGKREWMAEYLANEERAKRVAGNPMGASIPRIITPEFVRDEVARGRAIIPANINHPEVEPMAIGRNFKVKINANIGNSAVTSSIEEEVEKLVWAIRWGADNVMDLSTGKNIHTTRDWIVRNSPVPIGTVPIYQALEKVGGVAEDLTWEIFRDTLIEQAEQGIDYFTIHAGVRLPFIHLTADRMTGIVSRGGSIMAKWCIAHHKESFLYERFEDICDIMKAYDVSFSLGDGLRPGSGADANDEAQFAELRTLGELTQIAWKHDVQTMIEGPGHVPMHMIQANMDEQLKHCHEAPFYTLGPLTIDIAPGYDHISSAIGAAMIGWAGTAMLCYVTPKEHLGLPDRDDVKQGIIAYKIAAHAADVAKGHPGARSRDDALSKARFEFRWQDQFNLGLDPDTAREFHDETLPKDSSKVAHFCSMCGPKFCSMKITQEVREYAAKKGVAEAEAMAEGMAQKSREFMAGGGEIYIPIQPAS</sequence>
<reference key="1">
    <citation type="journal article" date="2011" name="J. Bacteriol.">
        <title>Complete genome sequence of the metabolically versatile plant growth-promoting endophyte, Variovorax paradoxus S110.</title>
        <authorList>
            <person name="Han J.I."/>
            <person name="Choi H.K."/>
            <person name="Lee S.W."/>
            <person name="Orwin P.M."/>
            <person name="Kim J."/>
            <person name="Laroe S.L."/>
            <person name="Kim T.G."/>
            <person name="O'Neil J."/>
            <person name="Leadbetter J.R."/>
            <person name="Lee S.Y."/>
            <person name="Hur C.G."/>
            <person name="Spain J.C."/>
            <person name="Ovchinnikova G."/>
            <person name="Goodwin L."/>
            <person name="Han C."/>
        </authorList>
    </citation>
    <scope>NUCLEOTIDE SEQUENCE [LARGE SCALE GENOMIC DNA]</scope>
    <source>
        <strain>S110</strain>
    </source>
</reference>
<feature type="chain" id="PRO_1000202659" description="Phosphomethylpyrimidine synthase">
    <location>
        <begin position="1"/>
        <end position="628"/>
    </location>
</feature>
<feature type="binding site" evidence="1">
    <location>
        <position position="229"/>
    </location>
    <ligand>
        <name>substrate</name>
    </ligand>
</feature>
<feature type="binding site" evidence="1">
    <location>
        <position position="258"/>
    </location>
    <ligand>
        <name>substrate</name>
    </ligand>
</feature>
<feature type="binding site" evidence="1">
    <location>
        <position position="287"/>
    </location>
    <ligand>
        <name>substrate</name>
    </ligand>
</feature>
<feature type="binding site" evidence="1">
    <location>
        <position position="323"/>
    </location>
    <ligand>
        <name>substrate</name>
    </ligand>
</feature>
<feature type="binding site" evidence="1">
    <location>
        <begin position="343"/>
        <end position="345"/>
    </location>
    <ligand>
        <name>substrate</name>
    </ligand>
</feature>
<feature type="binding site" evidence="1">
    <location>
        <begin position="384"/>
        <end position="387"/>
    </location>
    <ligand>
        <name>substrate</name>
    </ligand>
</feature>
<feature type="binding site" evidence="1">
    <location>
        <position position="423"/>
    </location>
    <ligand>
        <name>substrate</name>
    </ligand>
</feature>
<feature type="binding site" evidence="1">
    <location>
        <position position="427"/>
    </location>
    <ligand>
        <name>Zn(2+)</name>
        <dbReference type="ChEBI" id="CHEBI:29105"/>
    </ligand>
</feature>
<feature type="binding site" evidence="1">
    <location>
        <position position="450"/>
    </location>
    <ligand>
        <name>substrate</name>
    </ligand>
</feature>
<feature type="binding site" evidence="1">
    <location>
        <position position="491"/>
    </location>
    <ligand>
        <name>Zn(2+)</name>
        <dbReference type="ChEBI" id="CHEBI:29105"/>
    </ligand>
</feature>
<feature type="binding site" evidence="1">
    <location>
        <position position="571"/>
    </location>
    <ligand>
        <name>[4Fe-4S] cluster</name>
        <dbReference type="ChEBI" id="CHEBI:49883"/>
        <note>4Fe-4S-S-AdoMet</note>
    </ligand>
</feature>
<feature type="binding site" evidence="1">
    <location>
        <position position="574"/>
    </location>
    <ligand>
        <name>[4Fe-4S] cluster</name>
        <dbReference type="ChEBI" id="CHEBI:49883"/>
        <note>4Fe-4S-S-AdoMet</note>
    </ligand>
</feature>
<feature type="binding site" evidence="1">
    <location>
        <position position="579"/>
    </location>
    <ligand>
        <name>[4Fe-4S] cluster</name>
        <dbReference type="ChEBI" id="CHEBI:49883"/>
        <note>4Fe-4S-S-AdoMet</note>
    </ligand>
</feature>
<name>THIC_VARPS</name>
<organism>
    <name type="scientific">Variovorax paradoxus (strain S110)</name>
    <dbReference type="NCBI Taxonomy" id="543728"/>
    <lineage>
        <taxon>Bacteria</taxon>
        <taxon>Pseudomonadati</taxon>
        <taxon>Pseudomonadota</taxon>
        <taxon>Betaproteobacteria</taxon>
        <taxon>Burkholderiales</taxon>
        <taxon>Comamonadaceae</taxon>
        <taxon>Variovorax</taxon>
    </lineage>
</organism>